<protein>
    <recommendedName>
        <fullName evidence="17">Ribonuclease inhibitor</fullName>
    </recommendedName>
    <alternativeName>
        <fullName evidence="19">Placental ribonuclease inhibitor</fullName>
        <shortName evidence="19">Placental RNase inhibitor</shortName>
    </alternativeName>
    <alternativeName>
        <fullName evidence="18 20">Ribonuclease/angiogenin inhibitor 1</fullName>
        <shortName evidence="20">RAI</shortName>
    </alternativeName>
</protein>
<accession>P13489</accession>
<accession>Q8IZK8</accession>
<accession>Q96FD7</accession>
<accession>Q9BQ80</accession>
<accession>Q9UDK6</accession>
<comment type="function">
    <text evidence="2 3 5 7 8 9 10 11 15">Ribonuclease inhibitor which inhibits RNASE1, RNASE2 and angiogenin (ANG) (PubMed:12578357, PubMed:14515218, PubMed:3219362, PubMed:3243277, PubMed:3470787, PubMed:9050852). May play a role in redox homeostasis (PubMed:17292889). Required to inhibit the cytotoxic tRNA ribonuclease activity of ANG in the cytoplasm in absence of stress (PubMed:23843625, PubMed:32510170). Relocates to the nucleus in response to stress, relieving inhibition of ANG in the cytoplasm, and inhibiting the angiogenic activity of ANG in the nucleus (PubMed:23843625).</text>
</comment>
<comment type="subunit">
    <text evidence="4 6 16">Forms high-affinity heterodimers with RNASE1, ANG and RNASE2.</text>
</comment>
<comment type="interaction">
    <interactant intactId="EBI-1237106">
        <id>P13489</id>
    </interactant>
    <interactant intactId="EBI-525291">
        <id>P03950</id>
        <label>ANG</label>
    </interactant>
    <organismsDiffer>false</organismsDiffer>
    <experiments>6</experiments>
</comment>
<comment type="interaction">
    <interactant intactId="EBI-1237106">
        <id>P13489</id>
    </interactant>
    <interactant intactId="EBI-2823523">
        <id>P07998</id>
        <label>RNASE1</label>
    </interactant>
    <organismsDiffer>false</organismsDiffer>
    <experiments>10</experiments>
</comment>
<comment type="interaction">
    <interactant intactId="EBI-1237106">
        <id>P13489</id>
    </interactant>
    <interactant intactId="EBI-21572634">
        <id>Q9H1E1</id>
        <label>RNASE7</label>
    </interactant>
    <organismsDiffer>false</organismsDiffer>
    <experiments>2</experiments>
</comment>
<comment type="interaction">
    <interactant intactId="EBI-1237106">
        <id>P13489</id>
    </interactant>
    <interactant intactId="EBI-727004">
        <id>O00560</id>
        <label>SDCBP</label>
    </interactant>
    <organismsDiffer>false</organismsDiffer>
    <experiments>8</experiments>
</comment>
<comment type="interaction">
    <interactant intactId="EBI-1237106">
        <id>P13489</id>
    </interactant>
    <interactant intactId="EBI-720609">
        <id>O76024</id>
        <label>WFS1</label>
    </interactant>
    <organismsDiffer>false</organismsDiffer>
    <experiments>3</experiments>
</comment>
<comment type="interaction">
    <interactant intactId="EBI-1237106">
        <id>P13489</id>
    </interactant>
    <interactant intactId="EBI-908364">
        <id>P61823</id>
        <label>RNASE1</label>
    </interactant>
    <organismsDiffer>true</organismsDiffer>
    <experiments>3</experiments>
</comment>
<comment type="subcellular location">
    <subcellularLocation>
        <location evidence="7 23">Cytoplasm</location>
    </subcellularLocation>
    <subcellularLocation>
        <location evidence="7">Nucleus</location>
    </subcellularLocation>
    <text evidence="7">Localizes in the cytoplasm in absence of stress; translocates to the nucleus in response to stress.</text>
</comment>
<comment type="domain">
    <text evidence="4 6 16">The LRR domain forms a horseshoe-shaped structure that interacts tightly with target RNases via a large protein interaction surface on its interior side.</text>
</comment>
<comment type="PTM">
    <text evidence="14">The N-terminus is blocked.</text>
</comment>
<comment type="PTM">
    <text evidence="8">At least 30 of the 32 cysteine residues are in the reduced form.</text>
</comment>
<comment type="disease" evidence="12 13">
    <disease id="DI-06739">
        <name>Encephalitis, acute, infection-induced, 12</name>
        <acronym>IIAE12</acronym>
        <description>An autosomal recessive disorder apparent in infancy or early childhood, and characterized by acute encephalopathy triggered by viral infections and febrile illness. Neurologic features of the acute episodes include seizures, hemiplegia, decreased consciousness, hypotonia, abnormal posturing, feeding problems, and respiratory insufficiency. Disease severity is variable, ranging from death to normal neurologic outcomes.</description>
        <dbReference type="MIM" id="620461"/>
    </disease>
    <text>Disease susceptibility is associated with variants affecting the gene represented in this entry.</text>
</comment>
<dbReference type="EMBL" id="M22414">
    <property type="protein sequence ID" value="AAA59130.1"/>
    <property type="molecule type" value="mRNA"/>
</dbReference>
<dbReference type="EMBL" id="M36717">
    <property type="protein sequence ID" value="AAA60249.1"/>
    <property type="molecule type" value="mRNA"/>
</dbReference>
<dbReference type="EMBL" id="X13973">
    <property type="protein sequence ID" value="CAA32151.1"/>
    <property type="molecule type" value="mRNA"/>
</dbReference>
<dbReference type="EMBL" id="AY071904">
    <property type="protein sequence ID" value="AAL60586.1"/>
    <property type="molecule type" value="mRNA"/>
</dbReference>
<dbReference type="EMBL" id="AL161967">
    <property type="protein sequence ID" value="CAB82310.1"/>
    <property type="molecule type" value="mRNA"/>
</dbReference>
<dbReference type="EMBL" id="BC000677">
    <property type="protein sequence ID" value="AAH00677.1"/>
    <property type="molecule type" value="mRNA"/>
</dbReference>
<dbReference type="EMBL" id="BC003506">
    <property type="protein sequence ID" value="AAH03506.1"/>
    <property type="molecule type" value="mRNA"/>
</dbReference>
<dbReference type="EMBL" id="BC011186">
    <property type="protein sequence ID" value="AAH11186.1"/>
    <property type="molecule type" value="mRNA"/>
</dbReference>
<dbReference type="EMBL" id="BC011500">
    <property type="protein sequence ID" value="AAH11500.1"/>
    <property type="molecule type" value="mRNA"/>
</dbReference>
<dbReference type="EMBL" id="BC014629">
    <property type="protein sequence ID" value="AAH14629.1"/>
    <property type="molecule type" value="mRNA"/>
</dbReference>
<dbReference type="EMBL" id="BC024037">
    <property type="protein sequence ID" value="AAH24037.1"/>
    <property type="molecule type" value="mRNA"/>
</dbReference>
<dbReference type="EMBL" id="BC047730">
    <property type="protein sequence ID" value="AAH47730.1"/>
    <property type="molecule type" value="mRNA"/>
</dbReference>
<dbReference type="CCDS" id="CCDS7697.1"/>
<dbReference type="PIR" id="A31858">
    <property type="entry name" value="A31858"/>
</dbReference>
<dbReference type="RefSeq" id="NP_002930.2">
    <property type="nucleotide sequence ID" value="NM_002939.3"/>
</dbReference>
<dbReference type="RefSeq" id="NP_976317.1">
    <property type="nucleotide sequence ID" value="NM_203383.2"/>
</dbReference>
<dbReference type="RefSeq" id="NP_976318.1">
    <property type="nucleotide sequence ID" value="NM_203384.2"/>
</dbReference>
<dbReference type="RefSeq" id="NP_976319.1">
    <property type="nucleotide sequence ID" value="NM_203385.2"/>
</dbReference>
<dbReference type="RefSeq" id="NP_976320.1">
    <property type="nucleotide sequence ID" value="NM_203386.3"/>
</dbReference>
<dbReference type="RefSeq" id="NP_976321.1">
    <property type="nucleotide sequence ID" value="NM_203387.3"/>
</dbReference>
<dbReference type="RefSeq" id="NP_976322.1">
    <property type="nucleotide sequence ID" value="NM_203388.3"/>
</dbReference>
<dbReference type="RefSeq" id="NP_976323.1">
    <property type="nucleotide sequence ID" value="NM_203389.3"/>
</dbReference>
<dbReference type="RefSeq" id="XP_011518557.1">
    <property type="nucleotide sequence ID" value="XM_011520255.2"/>
</dbReference>
<dbReference type="RefSeq" id="XP_011518559.1">
    <property type="nucleotide sequence ID" value="XM_011520257.2"/>
</dbReference>
<dbReference type="RefSeq" id="XP_011518560.1">
    <property type="nucleotide sequence ID" value="XM_011520258.2"/>
</dbReference>
<dbReference type="RefSeq" id="XP_011518561.1">
    <property type="nucleotide sequence ID" value="XM_011520259.4"/>
</dbReference>
<dbReference type="RefSeq" id="XP_011518562.1">
    <property type="nucleotide sequence ID" value="XM_011520260.3"/>
</dbReference>
<dbReference type="RefSeq" id="XP_011518563.1">
    <property type="nucleotide sequence ID" value="XM_011520261.3"/>
</dbReference>
<dbReference type="RefSeq" id="XP_011518564.1">
    <property type="nucleotide sequence ID" value="XM_011520262.2"/>
</dbReference>
<dbReference type="RefSeq" id="XP_011518565.1">
    <property type="nucleotide sequence ID" value="XM_011520263.2"/>
</dbReference>
<dbReference type="RefSeq" id="XP_016873595.1">
    <property type="nucleotide sequence ID" value="XM_017018106.2"/>
</dbReference>
<dbReference type="RefSeq" id="XP_054184898.1">
    <property type="nucleotide sequence ID" value="XM_054328923.1"/>
</dbReference>
<dbReference type="RefSeq" id="XP_054184899.1">
    <property type="nucleotide sequence ID" value="XM_054328924.1"/>
</dbReference>
<dbReference type="RefSeq" id="XP_054184900.1">
    <property type="nucleotide sequence ID" value="XM_054328925.1"/>
</dbReference>
<dbReference type="RefSeq" id="XP_054184901.1">
    <property type="nucleotide sequence ID" value="XM_054328926.1"/>
</dbReference>
<dbReference type="RefSeq" id="XP_054184902.1">
    <property type="nucleotide sequence ID" value="XM_054328927.1"/>
</dbReference>
<dbReference type="RefSeq" id="XP_054184903.1">
    <property type="nucleotide sequence ID" value="XM_054328928.1"/>
</dbReference>
<dbReference type="RefSeq" id="XP_054184904.1">
    <property type="nucleotide sequence ID" value="XM_054328929.1"/>
</dbReference>
<dbReference type="PDB" id="1A4Y">
    <property type="method" value="X-ray"/>
    <property type="resolution" value="2.00 A"/>
    <property type="chains" value="A/D=2-461"/>
</dbReference>
<dbReference type="PDB" id="1Z7X">
    <property type="method" value="X-ray"/>
    <property type="resolution" value="1.95 A"/>
    <property type="chains" value="W/Y=1-461"/>
</dbReference>
<dbReference type="PDB" id="2BEX">
    <property type="method" value="X-ray"/>
    <property type="resolution" value="1.99 A"/>
    <property type="chains" value="A/B=2-461"/>
</dbReference>
<dbReference type="PDB" id="2Q4G">
    <property type="method" value="X-ray"/>
    <property type="resolution" value="1.95 A"/>
    <property type="chains" value="W/Y=1-461"/>
</dbReference>
<dbReference type="PDBsum" id="1A4Y"/>
<dbReference type="PDBsum" id="1Z7X"/>
<dbReference type="PDBsum" id="2BEX"/>
<dbReference type="PDBsum" id="2Q4G"/>
<dbReference type="SMR" id="P13489"/>
<dbReference type="BioGRID" id="111977">
    <property type="interactions" value="227"/>
</dbReference>
<dbReference type="CORUM" id="P13489"/>
<dbReference type="FunCoup" id="P13489">
    <property type="interactions" value="497"/>
</dbReference>
<dbReference type="IntAct" id="P13489">
    <property type="interactions" value="89"/>
</dbReference>
<dbReference type="MINT" id="P13489"/>
<dbReference type="STRING" id="9606.ENSP00000433999"/>
<dbReference type="GlyGen" id="P13489">
    <property type="glycosylation" value="1 site, 1 O-linked glycan (1 site)"/>
</dbReference>
<dbReference type="iPTMnet" id="P13489"/>
<dbReference type="PhosphoSitePlus" id="P13489"/>
<dbReference type="SwissPalm" id="P13489"/>
<dbReference type="BioMuta" id="RNH1"/>
<dbReference type="DMDM" id="132573"/>
<dbReference type="REPRODUCTION-2DPAGE" id="IPI00550069"/>
<dbReference type="jPOST" id="P13489"/>
<dbReference type="MassIVE" id="P13489"/>
<dbReference type="PaxDb" id="9606-ENSP00000433999"/>
<dbReference type="PeptideAtlas" id="P13489"/>
<dbReference type="PRIDE" id="P13489"/>
<dbReference type="ProteomicsDB" id="52913"/>
<dbReference type="Pumba" id="P13489"/>
<dbReference type="Antibodypedia" id="22490">
    <property type="antibodies" value="465 antibodies from 31 providers"/>
</dbReference>
<dbReference type="DNASU" id="6050"/>
<dbReference type="Ensembl" id="ENST00000354420.7">
    <property type="protein sequence ID" value="ENSP00000346402.2"/>
    <property type="gene ID" value="ENSG00000023191.17"/>
</dbReference>
<dbReference type="Ensembl" id="ENST00000356187.9">
    <property type="protein sequence ID" value="ENSP00000348515.5"/>
    <property type="gene ID" value="ENSG00000023191.17"/>
</dbReference>
<dbReference type="Ensembl" id="ENST00000397604.7">
    <property type="protein sequence ID" value="ENSP00000380729.3"/>
    <property type="gene ID" value="ENSG00000023191.17"/>
</dbReference>
<dbReference type="Ensembl" id="ENST00000397614.5">
    <property type="protein sequence ID" value="ENSP00000380738.1"/>
    <property type="gene ID" value="ENSG00000023191.17"/>
</dbReference>
<dbReference type="Ensembl" id="ENST00000397615.6">
    <property type="protein sequence ID" value="ENSP00000380739.2"/>
    <property type="gene ID" value="ENSG00000023191.17"/>
</dbReference>
<dbReference type="Ensembl" id="ENST00000438658.6">
    <property type="protein sequence ID" value="ENSP00000416589.2"/>
    <property type="gene ID" value="ENSG00000023191.17"/>
</dbReference>
<dbReference type="Ensembl" id="ENST00000533410.5">
    <property type="protein sequence ID" value="ENSP00000435594.1"/>
    <property type="gene ID" value="ENSG00000023191.17"/>
</dbReference>
<dbReference type="Ensembl" id="ENST00000534797.5">
    <property type="protein sequence ID" value="ENSP00000433999.1"/>
    <property type="gene ID" value="ENSG00000023191.17"/>
</dbReference>
<dbReference type="Ensembl" id="ENST00000612988.4">
    <property type="protein sequence ID" value="ENSP00000479004.1"/>
    <property type="gene ID" value="ENSG00000276230.4"/>
</dbReference>
<dbReference type="Ensembl" id="ENST00000617351.4">
    <property type="protein sequence ID" value="ENSP00000484572.1"/>
    <property type="gene ID" value="ENSG00000276230.4"/>
</dbReference>
<dbReference type="Ensembl" id="ENST00000618184.3">
    <property type="protein sequence ID" value="ENSP00000478664.1"/>
    <property type="gene ID" value="ENSG00000276230.4"/>
</dbReference>
<dbReference type="Ensembl" id="ENST00000619599.4">
    <property type="protein sequence ID" value="ENSP00000479966.1"/>
    <property type="gene ID" value="ENSG00000276230.4"/>
</dbReference>
<dbReference type="Ensembl" id="ENST00000621211.2">
    <property type="protein sequence ID" value="ENSP00000480036.1"/>
    <property type="gene ID" value="ENSG00000276230.4"/>
</dbReference>
<dbReference type="Ensembl" id="ENST00000632527.1">
    <property type="protein sequence ID" value="ENSP00000487940.1"/>
    <property type="gene ID" value="ENSG00000276230.4"/>
</dbReference>
<dbReference type="Ensembl" id="ENST00000632954.1">
    <property type="protein sequence ID" value="ENSP00000487753.1"/>
    <property type="gene ID" value="ENSG00000276230.4"/>
</dbReference>
<dbReference type="Ensembl" id="ENST00000633287.1">
    <property type="protein sequence ID" value="ENSP00000488734.1"/>
    <property type="gene ID" value="ENSG00000276230.4"/>
</dbReference>
<dbReference type="GeneID" id="6050"/>
<dbReference type="KEGG" id="hsa:6050"/>
<dbReference type="MANE-Select" id="ENST00000354420.7">
    <property type="protein sequence ID" value="ENSP00000346402.2"/>
    <property type="RefSeq nucleotide sequence ID" value="NM_203387.3"/>
    <property type="RefSeq protein sequence ID" value="NP_976321.1"/>
</dbReference>
<dbReference type="UCSC" id="uc001lpk.1">
    <property type="organism name" value="human"/>
</dbReference>
<dbReference type="AGR" id="HGNC:10074"/>
<dbReference type="CTD" id="6050"/>
<dbReference type="DisGeNET" id="6050"/>
<dbReference type="GeneCards" id="RNH1"/>
<dbReference type="HGNC" id="HGNC:10074">
    <property type="gene designation" value="RNH1"/>
</dbReference>
<dbReference type="HPA" id="ENSG00000023191">
    <property type="expression patterns" value="Low tissue specificity"/>
</dbReference>
<dbReference type="MalaCards" id="RNH1"/>
<dbReference type="MIM" id="173320">
    <property type="type" value="gene"/>
</dbReference>
<dbReference type="MIM" id="620461">
    <property type="type" value="phenotype"/>
</dbReference>
<dbReference type="neXtProt" id="NX_P13489"/>
<dbReference type="OpenTargets" id="ENSG00000023191"/>
<dbReference type="PharmGKB" id="PA34447"/>
<dbReference type="VEuPathDB" id="HostDB:ENSG00000023191"/>
<dbReference type="eggNOG" id="KOG4308">
    <property type="taxonomic scope" value="Eukaryota"/>
</dbReference>
<dbReference type="GeneTree" id="ENSGT00940000161492"/>
<dbReference type="HOGENOM" id="CLU_002274_4_6_1"/>
<dbReference type="InParanoid" id="P13489"/>
<dbReference type="OMA" id="CQLECLW"/>
<dbReference type="OrthoDB" id="120976at2759"/>
<dbReference type="PAN-GO" id="P13489">
    <property type="GO annotations" value="4 GO annotations based on evolutionary models"/>
</dbReference>
<dbReference type="PhylomeDB" id="P13489"/>
<dbReference type="PathwayCommons" id="P13489"/>
<dbReference type="SignaLink" id="P13489"/>
<dbReference type="BioGRID-ORCS" id="6050">
    <property type="hits" value="71 hits in 1152 CRISPR screens"/>
</dbReference>
<dbReference type="CD-CODE" id="DEE660B4">
    <property type="entry name" value="Stress granule"/>
</dbReference>
<dbReference type="ChiTaRS" id="RNH1">
    <property type="organism name" value="human"/>
</dbReference>
<dbReference type="EvolutionaryTrace" id="P13489"/>
<dbReference type="GeneWiki" id="RNH1"/>
<dbReference type="GenomeRNAi" id="6050"/>
<dbReference type="Pharos" id="P13489">
    <property type="development level" value="Tbio"/>
</dbReference>
<dbReference type="PRO" id="PR:P13489"/>
<dbReference type="Proteomes" id="UP000005640">
    <property type="component" value="Chromosome 11"/>
</dbReference>
<dbReference type="RNAct" id="P13489">
    <property type="molecule type" value="protein"/>
</dbReference>
<dbReference type="Bgee" id="ENSG00000023191">
    <property type="expression patterns" value="Expressed in skin of leg and 100 other cell types or tissues"/>
</dbReference>
<dbReference type="ExpressionAtlas" id="P13489">
    <property type="expression patterns" value="baseline and differential"/>
</dbReference>
<dbReference type="GO" id="GO:0032311">
    <property type="term" value="C:angiogenin-PRI complex"/>
    <property type="evidence" value="ECO:0000353"/>
    <property type="project" value="UniProtKB"/>
</dbReference>
<dbReference type="GO" id="GO:0005737">
    <property type="term" value="C:cytoplasm"/>
    <property type="evidence" value="ECO:0000314"/>
    <property type="project" value="UniProtKB"/>
</dbReference>
<dbReference type="GO" id="GO:0005829">
    <property type="term" value="C:cytosol"/>
    <property type="evidence" value="ECO:0000314"/>
    <property type="project" value="HPA"/>
</dbReference>
<dbReference type="GO" id="GO:0070062">
    <property type="term" value="C:extracellular exosome"/>
    <property type="evidence" value="ECO:0007005"/>
    <property type="project" value="UniProtKB"/>
</dbReference>
<dbReference type="GO" id="GO:0030027">
    <property type="term" value="C:lamellipodium"/>
    <property type="evidence" value="ECO:0000318"/>
    <property type="project" value="GO_Central"/>
</dbReference>
<dbReference type="GO" id="GO:0005654">
    <property type="term" value="C:nucleoplasm"/>
    <property type="evidence" value="ECO:0000314"/>
    <property type="project" value="HPA"/>
</dbReference>
<dbReference type="GO" id="GO:0005634">
    <property type="term" value="C:nucleus"/>
    <property type="evidence" value="ECO:0000314"/>
    <property type="project" value="UniProtKB"/>
</dbReference>
<dbReference type="GO" id="GO:0005886">
    <property type="term" value="C:plasma membrane"/>
    <property type="evidence" value="ECO:0000318"/>
    <property type="project" value="GO_Central"/>
</dbReference>
<dbReference type="GO" id="GO:0008428">
    <property type="term" value="F:ribonuclease inhibitor activity"/>
    <property type="evidence" value="ECO:0000314"/>
    <property type="project" value="UniProtKB"/>
</dbReference>
<dbReference type="GO" id="GO:0016477">
    <property type="term" value="P:cell migration"/>
    <property type="evidence" value="ECO:0000318"/>
    <property type="project" value="GO_Central"/>
</dbReference>
<dbReference type="GO" id="GO:0006402">
    <property type="term" value="P:mRNA catabolic process"/>
    <property type="evidence" value="ECO:0000303"/>
    <property type="project" value="UniProtKB"/>
</dbReference>
<dbReference type="GO" id="GO:0045765">
    <property type="term" value="P:regulation of angiogenesis"/>
    <property type="evidence" value="ECO:0000314"/>
    <property type="project" value="UniProtKB"/>
</dbReference>
<dbReference type="GO" id="GO:0034315">
    <property type="term" value="P:regulation of Arp2/3 complex-mediated actin nucleation"/>
    <property type="evidence" value="ECO:0000318"/>
    <property type="project" value="GO_Central"/>
</dbReference>
<dbReference type="GO" id="GO:0036416">
    <property type="term" value="P:tRNA stabilization"/>
    <property type="evidence" value="ECO:0000314"/>
    <property type="project" value="UniProt"/>
</dbReference>
<dbReference type="CDD" id="cd00116">
    <property type="entry name" value="LRR_RI"/>
    <property type="match status" value="1"/>
</dbReference>
<dbReference type="FunFam" id="3.80.10.10:FF:000440">
    <property type="entry name" value="Ribonuclease inhibitor"/>
    <property type="match status" value="1"/>
</dbReference>
<dbReference type="Gene3D" id="3.80.10.10">
    <property type="entry name" value="Ribonuclease Inhibitor"/>
    <property type="match status" value="1"/>
</dbReference>
<dbReference type="InterPro" id="IPR001611">
    <property type="entry name" value="Leu-rich_rpt"/>
</dbReference>
<dbReference type="InterPro" id="IPR006553">
    <property type="entry name" value="Leu-rich_rpt_Cys-con_subtyp"/>
</dbReference>
<dbReference type="InterPro" id="IPR032675">
    <property type="entry name" value="LRR_dom_sf"/>
</dbReference>
<dbReference type="InterPro" id="IPR041302">
    <property type="entry name" value="LRR_RI_cap"/>
</dbReference>
<dbReference type="InterPro" id="IPR050637">
    <property type="entry name" value="NLRP_innate_immun_reg"/>
</dbReference>
<dbReference type="PANTHER" id="PTHR45690">
    <property type="entry name" value="NACHT, LRR AND PYD DOMAINS-CONTAINING PROTEIN 12"/>
    <property type="match status" value="1"/>
</dbReference>
<dbReference type="PANTHER" id="PTHR45690:SF19">
    <property type="entry name" value="NACHT, LRR AND PYD DOMAINS-CONTAINING PROTEIN 3"/>
    <property type="match status" value="1"/>
</dbReference>
<dbReference type="Pfam" id="PF13516">
    <property type="entry name" value="LRR_6"/>
    <property type="match status" value="6"/>
</dbReference>
<dbReference type="Pfam" id="PF18779">
    <property type="entry name" value="LRR_RI_capping"/>
    <property type="match status" value="1"/>
</dbReference>
<dbReference type="SMART" id="SM00367">
    <property type="entry name" value="LRR_CC"/>
    <property type="match status" value="5"/>
</dbReference>
<dbReference type="SMART" id="SM00368">
    <property type="entry name" value="LRR_RI"/>
    <property type="match status" value="13"/>
</dbReference>
<dbReference type="SUPFAM" id="SSF52047">
    <property type="entry name" value="RNI-like"/>
    <property type="match status" value="2"/>
</dbReference>
<evidence type="ECO:0000269" key="1">
    <source>
    </source>
</evidence>
<evidence type="ECO:0000269" key="2">
    <source>
    </source>
</evidence>
<evidence type="ECO:0000269" key="3">
    <source>
    </source>
</evidence>
<evidence type="ECO:0000269" key="4">
    <source>
    </source>
</evidence>
<evidence type="ECO:0000269" key="5">
    <source>
    </source>
</evidence>
<evidence type="ECO:0000269" key="6">
    <source>
    </source>
</evidence>
<evidence type="ECO:0000269" key="7">
    <source>
    </source>
</evidence>
<evidence type="ECO:0000269" key="8">
    <source>
    </source>
</evidence>
<evidence type="ECO:0000269" key="9">
    <source>
    </source>
</evidence>
<evidence type="ECO:0000269" key="10">
    <source>
    </source>
</evidence>
<evidence type="ECO:0000269" key="11">
    <source>
    </source>
</evidence>
<evidence type="ECO:0000269" key="12">
    <source>
    </source>
</evidence>
<evidence type="ECO:0000269" key="13">
    <source>
    </source>
</evidence>
<evidence type="ECO:0000269" key="14">
    <source>
    </source>
</evidence>
<evidence type="ECO:0000269" key="15">
    <source>
    </source>
</evidence>
<evidence type="ECO:0000269" key="16">
    <source>
    </source>
</evidence>
<evidence type="ECO:0000303" key="17">
    <source>
    </source>
</evidence>
<evidence type="ECO:0000303" key="18">
    <source>
    </source>
</evidence>
<evidence type="ECO:0000303" key="19">
    <source>
    </source>
</evidence>
<evidence type="ECO:0000303" key="20">
    <source>
    </source>
</evidence>
<evidence type="ECO:0000303" key="21">
    <source>
    </source>
</evidence>
<evidence type="ECO:0000305" key="22"/>
<evidence type="ECO:0000305" key="23">
    <source>
    </source>
</evidence>
<evidence type="ECO:0000312" key="24">
    <source>
        <dbReference type="HGNC" id="HGNC:10074"/>
    </source>
</evidence>
<evidence type="ECO:0007744" key="25">
    <source>
    </source>
</evidence>
<evidence type="ECO:0007744" key="26">
    <source>
    </source>
</evidence>
<evidence type="ECO:0007744" key="27">
    <source>
    </source>
</evidence>
<evidence type="ECO:0007744" key="28">
    <source>
    </source>
</evidence>
<evidence type="ECO:0007829" key="29">
    <source>
        <dbReference type="PDB" id="1Z7X"/>
    </source>
</evidence>
<evidence type="ECO:0007829" key="30">
    <source>
        <dbReference type="PDB" id="2Q4G"/>
    </source>
</evidence>
<sequence length="461" mass="49973">MSLDIQSLDIQCEELSDARWAELLPLLQQCQVVRLDDCGLTEARCKDISSALRVNPALAELNLRSNELGDVGVHCVLQGLQTPSCKIQKLSLQNCCLTGAGCGVLSSTLRTLPTLQELHLSDNLLGDAGLQLLCEGLLDPQCRLEKLQLEYCSLSAASCEPLASVLRAKPDFKELTVSNNDINEAGVRVLCQGLKDSPCQLEALKLESCGVTSDNCRDLCGIVASKASLRELALGSNKLGDVGMAELCPGLLHPSSRLRTLWIWECGITAKGCGDLCRVLRAKESLKELSLAGNELGDEGARLLCETLLEPGCQLESLWVKSCSFTAACCSHFSSVLAQNRFLLELQISNNRLEDAGVRELCQGLGQPGSVLRVLWLADCDVSDSSCSSLAATLLANHSLRELDLSNNCLGDAGILQLVESVRQPGCLLEQLVLYDIYWSEEMEDRLQALEKDKPSLRVIS</sequence>
<name>RINI_HUMAN</name>
<reference key="1">
    <citation type="journal article" date="1988" name="Biochemistry">
        <title>Primary structure of human placental ribonuclease inhibitor.</title>
        <authorList>
            <person name="Lee F.S."/>
            <person name="Fox E.A."/>
            <person name="Zhou H.-M."/>
            <person name="Strydom D.J."/>
            <person name="Vallee B.L."/>
        </authorList>
    </citation>
    <scope>NUCLEOTIDE SEQUENCE [MRNA]</scope>
    <scope>PROTEIN SEQUENCE OF 20-28; 35-44; 47-62; 65-72; 87-130; 147-181; 189-200; 206-226; 231-235; 239-268; 272-276; 288-295; 297-299; 303-316; 353-364; 374-394; 402-412; 424-449 AND 453-461</scope>
    <scope>FUNCTION</scope>
    <scope>SUBCELLULAR LOCATION</scope>
    <scope>OXIDATION STATE OF THE CYSTEINES</scope>
    <source>
        <tissue>Placenta</tissue>
    </source>
</reference>
<reference key="2">
    <citation type="journal article" date="1988" name="EMBO J.">
        <title>The primary structure of human ribonuclease/angiogenin inhibitor (RAI) discloses a novel highly diversified protein superfamily with a common repetitive module.</title>
        <authorList>
            <person name="Schneider R."/>
            <person name="Schneider-Scherzer E."/>
            <person name="Thurnher M."/>
            <person name="Auer B."/>
            <person name="Schweiger M."/>
        </authorList>
    </citation>
    <scope>NUCLEOTIDE SEQUENCE [MRNA]</scope>
    <scope>FUNCTION</scope>
    <scope>PROTEIN SEQUENCE OF 444-462</scope>
</reference>
<reference key="3">
    <citation type="journal article" date="2003" name="Sheng Wu Hua Xue Yu Sheng Wu Wu Li Xue Bao">
        <title>Expression of a human ribonuclease inhibitor variant in Escherichia coli and silkworm insect cell (Bombyx mori).</title>
        <authorList>
            <person name="Huang G.H."/>
            <person name="Yang G.Z."/>
            <person name="Chen J.Y."/>
            <person name="Wu X.F."/>
        </authorList>
    </citation>
    <scope>NUCLEOTIDE SEQUENCE [MRNA]</scope>
    <scope>FUNCTION</scope>
</reference>
<reference key="4">
    <citation type="journal article" date="2007" name="BMC Genomics">
        <title>The full-ORF clone resource of the German cDNA consortium.</title>
        <authorList>
            <person name="Bechtel S."/>
            <person name="Rosenfelder H."/>
            <person name="Duda A."/>
            <person name="Schmidt C.P."/>
            <person name="Ernst U."/>
            <person name="Wellenreuther R."/>
            <person name="Mehrle A."/>
            <person name="Schuster C."/>
            <person name="Bahr A."/>
            <person name="Bloecker H."/>
            <person name="Heubner D."/>
            <person name="Hoerlein A."/>
            <person name="Michel G."/>
            <person name="Wedler H."/>
            <person name="Koehrer K."/>
            <person name="Ottenwaelder B."/>
            <person name="Poustka A."/>
            <person name="Wiemann S."/>
            <person name="Schupp I."/>
        </authorList>
    </citation>
    <scope>NUCLEOTIDE SEQUENCE [LARGE SCALE MRNA]</scope>
    <source>
        <tissue>Testis</tissue>
    </source>
</reference>
<reference key="5">
    <citation type="journal article" date="2004" name="Genome Res.">
        <title>The status, quality, and expansion of the NIH full-length cDNA project: the Mammalian Gene Collection (MGC).</title>
        <authorList>
            <consortium name="The MGC Project Team"/>
        </authorList>
    </citation>
    <scope>NUCLEOTIDE SEQUENCE [LARGE SCALE MRNA]</scope>
    <source>
        <tissue>Brain</tissue>
        <tissue>Colon</tissue>
        <tissue>Lymph</tissue>
        <tissue>Ovary</tissue>
    </source>
</reference>
<reference key="6">
    <citation type="journal article" date="1994" name="Arch. Biochem. Biophys.">
        <title>Purification and characterization of human brain ribonuclease inhibitor.</title>
        <authorList>
            <person name="Nadano D."/>
            <person name="Yasuda T."/>
            <person name="Takeshita H."/>
            <person name="Uchide K."/>
            <person name="Kishi K."/>
        </authorList>
    </citation>
    <scope>PROTEIN SEQUENCE OF 2-14</scope>
    <source>
        <tissue>Brain</tissue>
    </source>
</reference>
<reference key="7">
    <citation type="journal article" date="1992" name="Biochim. Biophys. Acta">
        <title>Characterisation of a tryptic peptide from human placental ribonuclease inhibitor which inhibits ribonuclease activity.</title>
        <authorList>
            <person name="Crevel-Thieffry I."/>
            <person name="Cotterill S."/>
            <person name="Schuller E."/>
        </authorList>
    </citation>
    <scope>PROTEIN SEQUENCE OF 174-195 AND 288-302</scope>
    <scope>INTERACTION WITH RNASE1</scope>
</reference>
<reference key="8">
    <citation type="journal article" date="1987" name="Proc. Natl. Acad. Sci. U.S.A.">
        <title>Human placental ribonuclease inhibitor abolishes both angiogenic and ribonucleolytic activities of angiogenin.</title>
        <authorList>
            <person name="Shapiro R."/>
            <person name="Vallee B.L."/>
        </authorList>
    </citation>
    <scope>FUNCTION</scope>
</reference>
<reference key="9">
    <citation type="journal article" date="1997" name="Proc. Natl. Acad. Sci. U.S.A.">
        <title>Site-specific mutagenesis reveals differences in the structural bases for tight binding of RNase inhibitor to angiogenin and RNase A.</title>
        <authorList>
            <person name="Chen C.Z."/>
            <person name="Shapiro R."/>
        </authorList>
    </citation>
    <scope>MUTAGENESIS OF SER-461</scope>
    <scope>INTERACTION WITH ANG AND RNASE1</scope>
</reference>
<reference key="10">
    <citation type="journal article" date="1999" name="Biochemistry">
        <title>Superadditive and subadditive effects of 'hot spot' mutations within the interfaces of placental ribonuclease inhibitor with angiogenin and ribonuclease A.</title>
        <authorList>
            <person name="Chen C.Z."/>
            <person name="Shapiro R."/>
        </authorList>
    </citation>
    <scope>MUTAGENESIS OF 435-TYR-ASP-436</scope>
    <scope>INTERACTION WITH ANG AND RNASE1</scope>
</reference>
<reference key="11">
    <citation type="journal article" date="2003" name="Biochemistry">
        <title>Mutational analysis of the complex of human RNase inhibitor and human eosinophil-derived neurotoxin (RNase 2).</title>
        <authorList>
            <person name="Teufel D.P."/>
            <person name="Kao R.Y."/>
            <person name="Acharya K.R."/>
            <person name="Shapiro R."/>
        </authorList>
    </citation>
    <scope>FUNCTION</scope>
    <scope>MUTAGENESIS OF TRP-262; TRP-264; TRP-319; 435-TYR-ASP-436 AND SER-461</scope>
    <scope>INTERACTION WITH RNASE2</scope>
</reference>
<reference key="12">
    <citation type="journal article" date="2007" name="FEBS Lett.">
        <title>The cytosolic ribonuclease inhibitor contributes to intracellular redox homeostasis.</title>
        <authorList>
            <person name="Monti D.M."/>
            <person name="Montesano Gesualdi N."/>
            <person name="Matousek J."/>
            <person name="Esposito F."/>
            <person name="D'Alessio G."/>
        </authorList>
    </citation>
    <scope>FUNCTION</scope>
</reference>
<reference key="13">
    <citation type="journal article" date="2008" name="Proc. Natl. Acad. Sci. U.S.A.">
        <title>A quantitative atlas of mitotic phosphorylation.</title>
        <authorList>
            <person name="Dephoure N."/>
            <person name="Zhou C."/>
            <person name="Villen J."/>
            <person name="Beausoleil S.A."/>
            <person name="Bakalarski C.E."/>
            <person name="Elledge S.J."/>
            <person name="Gygi S.P."/>
        </authorList>
    </citation>
    <scope>PHOSPHORYLATION [LARGE SCALE ANALYSIS] AT THR-82</scope>
    <scope>IDENTIFICATION BY MASS SPECTROMETRY [LARGE SCALE ANALYSIS]</scope>
    <source>
        <tissue>Cervix carcinoma</tissue>
    </source>
</reference>
<reference key="14">
    <citation type="journal article" date="2009" name="Sci. Signal.">
        <title>Quantitative phosphoproteomic analysis of T cell receptor signaling reveals system-wide modulation of protein-protein interactions.</title>
        <authorList>
            <person name="Mayya V."/>
            <person name="Lundgren D.H."/>
            <person name="Hwang S.-I."/>
            <person name="Rezaul K."/>
            <person name="Wu L."/>
            <person name="Eng J.K."/>
            <person name="Rodionov V."/>
            <person name="Han D.K."/>
        </authorList>
    </citation>
    <scope>PHOSPHORYLATION [LARGE SCALE ANALYSIS] AT SER-91</scope>
    <scope>IDENTIFICATION BY MASS SPECTROMETRY [LARGE SCALE ANALYSIS]</scope>
    <source>
        <tissue>Leukemic T-cell</tissue>
    </source>
</reference>
<reference key="15">
    <citation type="journal article" date="2010" name="Sci. Signal.">
        <title>Quantitative phosphoproteomics reveals widespread full phosphorylation site occupancy during mitosis.</title>
        <authorList>
            <person name="Olsen J.V."/>
            <person name="Vermeulen M."/>
            <person name="Santamaria A."/>
            <person name="Kumar C."/>
            <person name="Miller M.L."/>
            <person name="Jensen L.J."/>
            <person name="Gnad F."/>
            <person name="Cox J."/>
            <person name="Jensen T.S."/>
            <person name="Nigg E.A."/>
            <person name="Brunak S."/>
            <person name="Mann M."/>
        </authorList>
    </citation>
    <scope>IDENTIFICATION BY MASS SPECTROMETRY [LARGE SCALE ANALYSIS]</scope>
    <source>
        <tissue>Cervix carcinoma</tissue>
    </source>
</reference>
<reference key="16">
    <citation type="journal article" date="2011" name="BMC Syst. Biol.">
        <title>Initial characterization of the human central proteome.</title>
        <authorList>
            <person name="Burkard T.R."/>
            <person name="Planyavsky M."/>
            <person name="Kaupe I."/>
            <person name="Breitwieser F.P."/>
            <person name="Buerckstuemmer T."/>
            <person name="Bennett K.L."/>
            <person name="Superti-Furga G."/>
            <person name="Colinge J."/>
        </authorList>
    </citation>
    <scope>IDENTIFICATION BY MASS SPECTROMETRY [LARGE SCALE ANALYSIS]</scope>
</reference>
<reference key="17">
    <citation type="journal article" date="2012" name="Mol. Cell. Proteomics">
        <title>Comparative large-scale characterisation of plant vs. mammal proteins reveals similar and idiosyncratic N-alpha acetylation features.</title>
        <authorList>
            <person name="Bienvenut W.V."/>
            <person name="Sumpton D."/>
            <person name="Martinez A."/>
            <person name="Lilla S."/>
            <person name="Espagne C."/>
            <person name="Meinnel T."/>
            <person name="Giglione C."/>
        </authorList>
    </citation>
    <scope>ACETYLATION [LARGE SCALE ANALYSIS] AT SER-2</scope>
    <scope>CLEAVAGE OF INITIATOR METHIONINE [LARGE SCALE ANALYSIS]</scope>
    <scope>IDENTIFICATION BY MASS SPECTROMETRY [LARGE SCALE ANALYSIS]</scope>
</reference>
<reference key="18">
    <citation type="journal article" date="2012" name="Proc. Natl. Acad. Sci. U.S.A.">
        <title>N-terminal acetylome analyses and functional insights of the N-terminal acetyltransferase NatB.</title>
        <authorList>
            <person name="Van Damme P."/>
            <person name="Lasa M."/>
            <person name="Polevoda B."/>
            <person name="Gazquez C."/>
            <person name="Elosegui-Artola A."/>
            <person name="Kim D.S."/>
            <person name="De Juan-Pardo E."/>
            <person name="Demeyer K."/>
            <person name="Hole K."/>
            <person name="Larrea E."/>
            <person name="Timmerman E."/>
            <person name="Prieto J."/>
            <person name="Arnesen T."/>
            <person name="Sherman F."/>
            <person name="Gevaert K."/>
            <person name="Aldabe R."/>
        </authorList>
    </citation>
    <scope>ACETYLATION [LARGE SCALE ANALYSIS] AT SER-2</scope>
    <scope>CLEAVAGE OF INITIATOR METHIONINE [LARGE SCALE ANALYSIS]</scope>
    <scope>IDENTIFICATION BY MASS SPECTROMETRY [LARGE SCALE ANALYSIS]</scope>
</reference>
<reference key="19">
    <citation type="journal article" date="2013" name="J. Cell Sci.">
        <title>Ribonuclease/angiogenin inhibitor 1 regulates stress-induced subcellular localization of angiogenin to control growth and survival.</title>
        <authorList>
            <person name="Pizzo E."/>
            <person name="Sarcinelli C."/>
            <person name="Sheng J."/>
            <person name="Fusco S."/>
            <person name="Formiggini F."/>
            <person name="Netti P."/>
            <person name="Yu W."/>
            <person name="D'Alessio G."/>
            <person name="Hu G.F."/>
        </authorList>
    </citation>
    <scope>FUNCTION</scope>
    <scope>SUBCELLULAR LOCATION</scope>
</reference>
<reference key="20">
    <citation type="journal article" date="2014" name="J. Proteomics">
        <title>An enzyme assisted RP-RPLC approach for in-depth analysis of human liver phosphoproteome.</title>
        <authorList>
            <person name="Bian Y."/>
            <person name="Song C."/>
            <person name="Cheng K."/>
            <person name="Dong M."/>
            <person name="Wang F."/>
            <person name="Huang J."/>
            <person name="Sun D."/>
            <person name="Wang L."/>
            <person name="Ye M."/>
            <person name="Zou H."/>
        </authorList>
    </citation>
    <scope>IDENTIFICATION BY MASS SPECTROMETRY [LARGE SCALE ANALYSIS]</scope>
    <source>
        <tissue>Liver</tissue>
    </source>
</reference>
<reference key="21">
    <citation type="journal article" date="2015" name="Proteomics">
        <title>N-terminome analysis of the human mitochondrial proteome.</title>
        <authorList>
            <person name="Vaca Jacome A.S."/>
            <person name="Rabilloud T."/>
            <person name="Schaeffer-Reiss C."/>
            <person name="Rompais M."/>
            <person name="Ayoub D."/>
            <person name="Lane L."/>
            <person name="Bairoch A."/>
            <person name="Van Dorsselaer A."/>
            <person name="Carapito C."/>
        </authorList>
    </citation>
    <scope>IDENTIFICATION BY MASS SPECTROMETRY [LARGE SCALE ANALYSIS]</scope>
</reference>
<reference key="22">
    <citation type="journal article" date="2020" name="EMBO J.">
        <title>Myeloid cells protect intestinal epithelial barrier integrity through the angiogenin/plexin-B2 axis.</title>
        <authorList>
            <person name="Bai R."/>
            <person name="Sun D."/>
            <person name="Chen M."/>
            <person name="Shi X."/>
            <person name="Luo L."/>
            <person name="Yao Z."/>
            <person name="Liu Y."/>
            <person name="Ge X."/>
            <person name="Gao X."/>
            <person name="Hu G.F."/>
            <person name="Zhou W."/>
            <person name="Sheng J."/>
            <person name="Xu Z."/>
        </authorList>
    </citation>
    <scope>FUNCTION</scope>
</reference>
<reference key="23">
    <citation type="journal article" date="2023" name="Eur. J. Hum. Genet.">
        <title>Ribonuclease inhibitor 1 (RNH1) deficiency cause congenital cataracts and global developmental delay with infection-induced psychomotor regression and anemia.</title>
        <authorList>
            <person name="Hedberg-Oldfors C."/>
            <person name="Mitra S."/>
            <person name="Molinaro A."/>
            <person name="Visuttijai K."/>
            <person name="Fogelstrand L."/>
            <person name="Oldfors A."/>
            <person name="Sterky F.H."/>
            <person name="Darin N."/>
        </authorList>
    </citation>
    <scope>INVOLVEMENT IN IIAE12</scope>
</reference>
<reference key="24">
    <citation type="journal article" date="1997" name="EMBO J.">
        <title>Molecular recognition of human angiogenin by placental ribonuclease inhibitor -- an X-ray crystallographic study at 2.0-A resolution.</title>
        <authorList>
            <person name="Papageorgiou A.C."/>
            <person name="Shapiro R."/>
            <person name="Acharya K.R."/>
        </authorList>
    </citation>
    <scope>X-RAY CRYSTALLOGRAPHY (2.0 ANGSTROMS) OF 2-461 IN COMPLEX WITH ANG</scope>
    <scope>INTERACTION WITH ANG</scope>
    <scope>DOMAIN</scope>
</reference>
<reference key="25">
    <citation type="journal article" date="2005" name="J. Mol. Biol.">
        <title>Molecular recognition of human eosinophil-derived neurotoxin (RNase 2) by placental ribonuclease inhibitor.</title>
        <authorList>
            <person name="Iyer S."/>
            <person name="Holloway D.E."/>
            <person name="Kumar K."/>
            <person name="Shapiro R."/>
            <person name="Acharya K.R."/>
        </authorList>
    </citation>
    <scope>X-RAY CRYSTALLOGRAPHY (2.0 ANGSTROMS) OF 2-461 IN COMPLEX WITH RNASE2</scope>
    <scope>DOMAIN</scope>
    <scope>INTERACTION WITH RNASE2</scope>
    <scope>MUTAGENESIS OF TRP-376 AND ARG-458</scope>
</reference>
<reference key="26">
    <citation type="journal article" date="2007" name="J. Mol. Biol.">
        <title>Inhibition of human pancreatic ribonuclease by the human ribonuclease inhibitor protein.</title>
        <authorList>
            <person name="Johnson R.J."/>
            <person name="McCoy J.G."/>
            <person name="Bingman C.A."/>
            <person name="Phillips G.N. Jr."/>
            <person name="Raines R.T."/>
        </authorList>
    </citation>
    <scope>X-RAY CRYSTALLOGRAPHY (1.95 ANGSTROMS) IN COMPLEX WITH RNASE1</scope>
    <scope>DOMAIN</scope>
    <scope>INTERACTION WITH RNASE1</scope>
</reference>
<reference key="27">
    <citation type="journal article" date="2023" name="Genet. Med.">
        <title>Biallelic variants in ribonuclease inhibitor (RNH1), an inflammasome modulator, are associated with a distinctive subtype of acute, necrotizing encephalopathy.</title>
        <authorList>
            <consortium name="Undiagnosed Diseases Network"/>
            <person name="Shashi V."/>
            <person name="Schoch K."/>
            <person name="Ganetzky R."/>
            <person name="Kranz P.G."/>
            <person name="Sondheimer N."/>
            <person name="Markert M.L."/>
            <person name="Cope H."/>
            <person name="Sadeghpour A."/>
            <person name="Roehrs P."/>
            <person name="Arbogast T."/>
            <person name="Muraresku C."/>
            <person name="Tyndall A.V."/>
            <person name="Esser M.J."/>
            <person name="Woodward K.E."/>
            <person name="Ping-Yee Au B."/>
            <person name="Parboosingh J.S."/>
            <person name="Lamont R.E."/>
            <person name="Bernier F.P."/>
            <person name="Wright N.A.M."/>
            <person name="Benseler S.M."/>
            <person name="Parsons S.J."/>
            <person name="El-Dairi M."/>
            <person name="Smith E.C."/>
            <person name="Valdez P."/>
            <person name="Tennison M."/>
            <person name="Innes A.M."/>
            <person name="Davis E.E."/>
        </authorList>
    </citation>
    <scope>VARIANTS IIAE12 14-GLU--SER-461 DEL; HIS-93; TYR-209; PRO-296 AND TRP-373</scope>
    <scope>INVOLVEMENT IN IIAE12</scope>
</reference>
<proteinExistence type="evidence at protein level"/>
<keyword id="KW-0002">3D-structure</keyword>
<keyword id="KW-0007">Acetylation</keyword>
<keyword id="KW-0963">Cytoplasm</keyword>
<keyword id="KW-0903">Direct protein sequencing</keyword>
<keyword id="KW-0225">Disease variant</keyword>
<keyword id="KW-0433">Leucine-rich repeat</keyword>
<keyword id="KW-0539">Nucleus</keyword>
<keyword id="KW-0597">Phosphoprotein</keyword>
<keyword id="KW-1267">Proteomics identification</keyword>
<keyword id="KW-1185">Reference proteome</keyword>
<keyword id="KW-0677">Repeat</keyword>
<organism>
    <name type="scientific">Homo sapiens</name>
    <name type="common">Human</name>
    <dbReference type="NCBI Taxonomy" id="9606"/>
    <lineage>
        <taxon>Eukaryota</taxon>
        <taxon>Metazoa</taxon>
        <taxon>Chordata</taxon>
        <taxon>Craniata</taxon>
        <taxon>Vertebrata</taxon>
        <taxon>Euteleostomi</taxon>
        <taxon>Mammalia</taxon>
        <taxon>Eutheria</taxon>
        <taxon>Euarchontoglires</taxon>
        <taxon>Primates</taxon>
        <taxon>Haplorrhini</taxon>
        <taxon>Catarrhini</taxon>
        <taxon>Hominidae</taxon>
        <taxon>Homo</taxon>
    </lineage>
</organism>
<feature type="initiator methionine" description="Removed" evidence="14 27 28">
    <location>
        <position position="1"/>
    </location>
</feature>
<feature type="chain" id="PRO_0000097343" description="Ribonuclease inhibitor">
    <location>
        <begin position="2"/>
        <end position="461"/>
    </location>
</feature>
<feature type="repeat" description="LRR 1">
    <location>
        <begin position="20"/>
        <end position="48"/>
    </location>
</feature>
<feature type="repeat" description="LRR 2">
    <location>
        <begin position="49"/>
        <end position="76"/>
    </location>
</feature>
<feature type="repeat" description="LRR 3">
    <location>
        <begin position="77"/>
        <end position="105"/>
    </location>
</feature>
<feature type="repeat" description="LRR 4">
    <location>
        <begin position="106"/>
        <end position="133"/>
    </location>
</feature>
<feature type="repeat" description="LRR 5">
    <location>
        <begin position="134"/>
        <end position="162"/>
    </location>
</feature>
<feature type="repeat" description="LRR 6">
    <location>
        <begin position="163"/>
        <end position="190"/>
    </location>
</feature>
<feature type="repeat" description="LRR 7">
    <location>
        <begin position="191"/>
        <end position="219"/>
    </location>
</feature>
<feature type="repeat" description="LRR 8">
    <location>
        <begin position="220"/>
        <end position="247"/>
    </location>
</feature>
<feature type="repeat" description="LRR 9">
    <location>
        <begin position="248"/>
        <end position="276"/>
    </location>
</feature>
<feature type="repeat" description="LRR 10">
    <location>
        <begin position="277"/>
        <end position="304"/>
    </location>
</feature>
<feature type="repeat" description="LRR 11">
    <location>
        <begin position="305"/>
        <end position="333"/>
    </location>
</feature>
<feature type="repeat" description="LRR 12">
    <location>
        <begin position="334"/>
        <end position="361"/>
    </location>
</feature>
<feature type="repeat" description="LRR 13">
    <location>
        <begin position="362"/>
        <end position="390"/>
    </location>
</feature>
<feature type="repeat" description="LRR 14">
    <location>
        <begin position="391"/>
        <end position="418"/>
    </location>
</feature>
<feature type="repeat" description="LRR 15">
    <location>
        <begin position="419"/>
        <end position="447"/>
    </location>
</feature>
<feature type="region of interest" description="2 X 5 AA tandem repeats of S-L-D-I-Q">
    <location>
        <begin position="2"/>
        <end position="11"/>
    </location>
</feature>
<feature type="modified residue" description="N-acetylserine" evidence="27 28">
    <location>
        <position position="2"/>
    </location>
</feature>
<feature type="modified residue" description="Phosphothreonine" evidence="25">
    <location>
        <position position="82"/>
    </location>
</feature>
<feature type="modified residue" description="Phosphoserine" evidence="26">
    <location>
        <position position="91"/>
    </location>
</feature>
<feature type="sequence variant" id="VAR_088810" description="In IIAE12; risk factor." evidence="13">
    <location>
        <begin position="14"/>
        <end position="461"/>
    </location>
</feature>
<feature type="sequence variant" id="VAR_088811" description="In IIAE12; uncertain significance." evidence="13">
    <original>Q</original>
    <variation>H</variation>
    <location>
        <position position="93"/>
    </location>
</feature>
<feature type="sequence variant" id="VAR_014726" description="In dbSNP:rs17585.">
    <original>P</original>
    <variation>L</variation>
    <location>
        <position position="170"/>
    </location>
</feature>
<feature type="sequence variant" id="VAR_088812" description="In IIAE12; uncertain significance." evidence="13">
    <original>C</original>
    <variation>Y</variation>
    <location>
        <position position="209"/>
    </location>
</feature>
<feature type="sequence variant" id="VAR_088813" description="In IIAE12; uncertain significance." evidence="13">
    <original>L</original>
    <variation>P</variation>
    <location>
        <position position="296"/>
    </location>
</feature>
<feature type="sequence variant" id="VAR_088814" description="In IIAE12; risk factor." evidence="13">
    <original>R</original>
    <variation>W</variation>
    <location>
        <position position="373"/>
    </location>
</feature>
<feature type="mutagenesis site" description="Binding affinity decreased 5000-fold over the wild type for RNASE2; when associated with A-264 and A-319." evidence="2">
    <original>W</original>
    <variation>A</variation>
    <location>
        <position position="262"/>
    </location>
</feature>
<feature type="mutagenesis site" description="Substantially decreased binding affinity for RNASE2. Binding affinity decreased 5000-fold over the wild type for RNASE2; when associated with A-262 and A-319." evidence="2">
    <original>W</original>
    <variation>A</variation>
    <location>
        <position position="264"/>
    </location>
</feature>
<feature type="mutagenesis site" description="Substantially decreased binding affinity for RNASE2. Binding affinity decreased 5000-fold over the wild type for RNASE2; when associated with A-262 and A-264." evidence="2">
    <original>W</original>
    <variation>A</variation>
    <location>
        <position position="319"/>
    </location>
</feature>
<feature type="mutagenesis site" description="40-fold reduction in binding affinity for RNASE2." evidence="4">
    <original>W</original>
    <variation>A</variation>
    <location>
        <position position="376"/>
    </location>
</feature>
<feature type="mutagenesis site" description="Substantially decreases binding affinity for RNASE1, ANG and RNASE2." evidence="1 2">
    <original>YD</original>
    <variation>AA</variation>
    <location>
        <begin position="435"/>
        <end position="436"/>
    </location>
</feature>
<feature type="mutagenesis site" description="25-fold reduction in binding affinity for RNASE2." evidence="4">
    <original>R</original>
    <variation>A</variation>
    <location>
        <position position="458"/>
    </location>
</feature>
<feature type="mutagenesis site" description="A significant decrease in binding affinity with RNASE1, slight decrease for the ANG ligand, no real change in binding affinity for RNASE2." evidence="2 15">
    <location>
        <position position="461"/>
    </location>
</feature>
<feature type="sequence conflict" description="In Ref. 5; AAH03506." evidence="22" ref="5">
    <original>R</original>
    <variation>H</variation>
    <location>
        <position position="188"/>
    </location>
</feature>
<feature type="sequence conflict" description="In Ref. 3; AAL60586." evidence="22" ref="3">
    <original>R</original>
    <variation>A</variation>
    <location>
        <position position="359"/>
    </location>
</feature>
<feature type="sequence conflict" description="In Ref. 3; AAL60586." evidence="22" ref="3">
    <original>L</original>
    <variation>P</variation>
    <location>
        <position position="365"/>
    </location>
</feature>
<feature type="sequence conflict" description="In Ref. 2; CAA32151/AAA60249." evidence="22" ref="2">
    <original>RQ</original>
    <variation>SE</variation>
    <location>
        <begin position="423"/>
        <end position="424"/>
    </location>
</feature>
<feature type="strand" evidence="29">
    <location>
        <begin position="3"/>
        <end position="12"/>
    </location>
</feature>
<feature type="helix" evidence="29">
    <location>
        <begin position="17"/>
        <end position="27"/>
    </location>
</feature>
<feature type="strand" evidence="29">
    <location>
        <begin position="31"/>
        <end position="38"/>
    </location>
</feature>
<feature type="helix" evidence="29">
    <location>
        <begin position="42"/>
        <end position="53"/>
    </location>
</feature>
<feature type="strand" evidence="29">
    <location>
        <begin position="60"/>
        <end position="62"/>
    </location>
</feature>
<feature type="helix" evidence="29">
    <location>
        <begin position="69"/>
        <end position="78"/>
    </location>
</feature>
<feature type="strand" evidence="29">
    <location>
        <begin position="89"/>
        <end position="91"/>
    </location>
</feature>
<feature type="helix" evidence="29">
    <location>
        <begin position="99"/>
        <end position="101"/>
    </location>
</feature>
<feature type="helix" evidence="29">
    <location>
        <begin position="102"/>
        <end position="108"/>
    </location>
</feature>
<feature type="strand" evidence="29">
    <location>
        <begin position="117"/>
        <end position="119"/>
    </location>
</feature>
<feature type="strand" evidence="29">
    <location>
        <begin position="122"/>
        <end position="124"/>
    </location>
</feature>
<feature type="helix" evidence="29">
    <location>
        <begin position="126"/>
        <end position="137"/>
    </location>
</feature>
<feature type="strand" evidence="29">
    <location>
        <begin position="146"/>
        <end position="148"/>
    </location>
</feature>
<feature type="helix" evidence="29">
    <location>
        <begin position="156"/>
        <end position="158"/>
    </location>
</feature>
<feature type="helix" evidence="29">
    <location>
        <begin position="159"/>
        <end position="168"/>
    </location>
</feature>
<feature type="strand" evidence="29">
    <location>
        <begin position="174"/>
        <end position="176"/>
    </location>
</feature>
<feature type="strand" evidence="29">
    <location>
        <begin position="179"/>
        <end position="181"/>
    </location>
</feature>
<feature type="helix" evidence="29">
    <location>
        <begin position="183"/>
        <end position="196"/>
    </location>
</feature>
<feature type="strand" evidence="29">
    <location>
        <begin position="203"/>
        <end position="205"/>
    </location>
</feature>
<feature type="helix" evidence="29">
    <location>
        <begin position="215"/>
        <end position="225"/>
    </location>
</feature>
<feature type="strand" evidence="29">
    <location>
        <begin position="231"/>
        <end position="233"/>
    </location>
</feature>
<feature type="strand" evidence="29">
    <location>
        <begin position="236"/>
        <end position="238"/>
    </location>
</feature>
<feature type="helix" evidence="29">
    <location>
        <begin position="240"/>
        <end position="251"/>
    </location>
</feature>
<feature type="strand" evidence="29">
    <location>
        <begin position="260"/>
        <end position="262"/>
    </location>
</feature>
<feature type="helix" evidence="29">
    <location>
        <begin position="270"/>
        <end position="282"/>
    </location>
</feature>
<feature type="strand" evidence="29">
    <location>
        <begin position="288"/>
        <end position="290"/>
    </location>
</feature>
<feature type="helix" evidence="29">
    <location>
        <begin position="297"/>
        <end position="308"/>
    </location>
</feature>
<feature type="strand" evidence="30">
    <location>
        <begin position="310"/>
        <end position="312"/>
    </location>
</feature>
<feature type="strand" evidence="29">
    <location>
        <begin position="317"/>
        <end position="319"/>
    </location>
</feature>
<feature type="helix" evidence="29">
    <location>
        <begin position="327"/>
        <end position="329"/>
    </location>
</feature>
<feature type="helix" evidence="29">
    <location>
        <begin position="330"/>
        <end position="339"/>
    </location>
</feature>
<feature type="strand" evidence="29">
    <location>
        <begin position="345"/>
        <end position="347"/>
    </location>
</feature>
<feature type="strand" evidence="29">
    <location>
        <begin position="350"/>
        <end position="352"/>
    </location>
</feature>
<feature type="helix" evidence="29">
    <location>
        <begin position="354"/>
        <end position="365"/>
    </location>
</feature>
<feature type="strand" evidence="29">
    <location>
        <begin position="374"/>
        <end position="376"/>
    </location>
</feature>
<feature type="helix" evidence="29">
    <location>
        <begin position="384"/>
        <end position="396"/>
    </location>
</feature>
<feature type="strand" evidence="29">
    <location>
        <begin position="402"/>
        <end position="404"/>
    </location>
</feature>
<feature type="strand" evidence="29">
    <location>
        <begin position="407"/>
        <end position="409"/>
    </location>
</feature>
<feature type="helix" evidence="29">
    <location>
        <begin position="412"/>
        <end position="422"/>
    </location>
</feature>
<feature type="strand" evidence="29">
    <location>
        <begin position="431"/>
        <end position="433"/>
    </location>
</feature>
<feature type="helix" evidence="29">
    <location>
        <begin position="441"/>
        <end position="453"/>
    </location>
</feature>
<feature type="strand" evidence="29">
    <location>
        <begin position="457"/>
        <end position="460"/>
    </location>
</feature>
<gene>
    <name evidence="21 24" type="primary">RNH1</name>
    <name evidence="19" type="synonym">PRI</name>
    <name type="synonym">RNH</name>
</gene>